<sequence>MSKFLVKAPAKINLFLHILGKNNNYHSLESLLVFVNIYDILEVTIDAPRSGVYFTNLKINRYNNTITKVIYLLSQHSTSSVNVFVSVIKNILVSAGLAGGSADAAAVMRLLGNVWDIQPQVLEELALEIGSDVPACLHSKTLFARGRGEDILLLPDLCLPKYIVIVAPKGKPLSTVKVFNNYEPSAFSSPICDNLPVRQDDWLELIYNARNDLLDTALKFVPEIEEILFVLRKFRNCLIARMTGSGATCFALFNELSDAEVVVRELQMTRPDWIVFNAKIL</sequence>
<proteinExistence type="inferred from homology"/>
<dbReference type="EC" id="2.7.1.148" evidence="1"/>
<dbReference type="EMBL" id="CR925677">
    <property type="protein sequence ID" value="CAI27789.1"/>
    <property type="molecule type" value="Genomic_DNA"/>
</dbReference>
<dbReference type="RefSeq" id="WP_011255487.1">
    <property type="nucleotide sequence ID" value="NC_006831.1"/>
</dbReference>
<dbReference type="SMR" id="Q5FHM5"/>
<dbReference type="KEGG" id="erg:ERGA_CDS_03370"/>
<dbReference type="HOGENOM" id="CLU_053057_1_0_5"/>
<dbReference type="OrthoDB" id="9809438at2"/>
<dbReference type="UniPathway" id="UPA00056">
    <property type="reaction ID" value="UER00094"/>
</dbReference>
<dbReference type="Proteomes" id="UP000000533">
    <property type="component" value="Chromosome"/>
</dbReference>
<dbReference type="GO" id="GO:0050515">
    <property type="term" value="F:4-(cytidine 5'-diphospho)-2-C-methyl-D-erythritol kinase activity"/>
    <property type="evidence" value="ECO:0007669"/>
    <property type="project" value="UniProtKB-UniRule"/>
</dbReference>
<dbReference type="GO" id="GO:0005524">
    <property type="term" value="F:ATP binding"/>
    <property type="evidence" value="ECO:0007669"/>
    <property type="project" value="UniProtKB-UniRule"/>
</dbReference>
<dbReference type="GO" id="GO:0019288">
    <property type="term" value="P:isopentenyl diphosphate biosynthetic process, methylerythritol 4-phosphate pathway"/>
    <property type="evidence" value="ECO:0007669"/>
    <property type="project" value="UniProtKB-UniRule"/>
</dbReference>
<dbReference type="GO" id="GO:0016114">
    <property type="term" value="P:terpenoid biosynthetic process"/>
    <property type="evidence" value="ECO:0007669"/>
    <property type="project" value="InterPro"/>
</dbReference>
<dbReference type="Gene3D" id="3.30.230.10">
    <property type="match status" value="1"/>
</dbReference>
<dbReference type="Gene3D" id="3.30.70.890">
    <property type="entry name" value="GHMP kinase, C-terminal domain"/>
    <property type="match status" value="1"/>
</dbReference>
<dbReference type="HAMAP" id="MF_00061">
    <property type="entry name" value="IspE"/>
    <property type="match status" value="1"/>
</dbReference>
<dbReference type="InterPro" id="IPR013750">
    <property type="entry name" value="GHMP_kinase_C_dom"/>
</dbReference>
<dbReference type="InterPro" id="IPR036554">
    <property type="entry name" value="GHMP_kinase_C_sf"/>
</dbReference>
<dbReference type="InterPro" id="IPR006204">
    <property type="entry name" value="GHMP_kinase_N_dom"/>
</dbReference>
<dbReference type="InterPro" id="IPR004424">
    <property type="entry name" value="IspE"/>
</dbReference>
<dbReference type="InterPro" id="IPR020568">
    <property type="entry name" value="Ribosomal_Su5_D2-typ_SF"/>
</dbReference>
<dbReference type="InterPro" id="IPR014721">
    <property type="entry name" value="Ribsml_uS5_D2-typ_fold_subgr"/>
</dbReference>
<dbReference type="NCBIfam" id="TIGR00154">
    <property type="entry name" value="ispE"/>
    <property type="match status" value="1"/>
</dbReference>
<dbReference type="NCBIfam" id="NF011202">
    <property type="entry name" value="PRK14608.1"/>
    <property type="match status" value="1"/>
</dbReference>
<dbReference type="PANTHER" id="PTHR43527">
    <property type="entry name" value="4-DIPHOSPHOCYTIDYL-2-C-METHYL-D-ERYTHRITOL KINASE, CHLOROPLASTIC"/>
    <property type="match status" value="1"/>
</dbReference>
<dbReference type="PANTHER" id="PTHR43527:SF2">
    <property type="entry name" value="4-DIPHOSPHOCYTIDYL-2-C-METHYL-D-ERYTHRITOL KINASE, CHLOROPLASTIC"/>
    <property type="match status" value="1"/>
</dbReference>
<dbReference type="Pfam" id="PF08544">
    <property type="entry name" value="GHMP_kinases_C"/>
    <property type="match status" value="1"/>
</dbReference>
<dbReference type="Pfam" id="PF00288">
    <property type="entry name" value="GHMP_kinases_N"/>
    <property type="match status" value="1"/>
</dbReference>
<dbReference type="PIRSF" id="PIRSF010376">
    <property type="entry name" value="IspE"/>
    <property type="match status" value="1"/>
</dbReference>
<dbReference type="SUPFAM" id="SSF55060">
    <property type="entry name" value="GHMP Kinase, C-terminal domain"/>
    <property type="match status" value="1"/>
</dbReference>
<dbReference type="SUPFAM" id="SSF54211">
    <property type="entry name" value="Ribosomal protein S5 domain 2-like"/>
    <property type="match status" value="1"/>
</dbReference>
<organism>
    <name type="scientific">Ehrlichia ruminantium (strain Gardel)</name>
    <dbReference type="NCBI Taxonomy" id="302409"/>
    <lineage>
        <taxon>Bacteria</taxon>
        <taxon>Pseudomonadati</taxon>
        <taxon>Pseudomonadota</taxon>
        <taxon>Alphaproteobacteria</taxon>
        <taxon>Rickettsiales</taxon>
        <taxon>Anaplasmataceae</taxon>
        <taxon>Ehrlichia</taxon>
    </lineage>
</organism>
<protein>
    <recommendedName>
        <fullName evidence="1">4-diphosphocytidyl-2-C-methyl-D-erythritol kinase</fullName>
        <shortName evidence="1">CMK</shortName>
        <ecNumber evidence="1">2.7.1.148</ecNumber>
    </recommendedName>
    <alternativeName>
        <fullName evidence="1">4-(cytidine-5'-diphospho)-2-C-methyl-D-erythritol kinase</fullName>
    </alternativeName>
</protein>
<gene>
    <name evidence="1" type="primary">ispE</name>
    <name type="ordered locus">ERGA_CDS_03370</name>
</gene>
<accession>Q5FHM5</accession>
<feature type="chain" id="PRO_0000235090" description="4-diphosphocytidyl-2-C-methyl-D-erythritol kinase">
    <location>
        <begin position="1"/>
        <end position="281"/>
    </location>
</feature>
<feature type="active site" evidence="1">
    <location>
        <position position="11"/>
    </location>
</feature>
<feature type="active site" evidence="1">
    <location>
        <position position="132"/>
    </location>
</feature>
<feature type="binding site" evidence="1">
    <location>
        <begin position="92"/>
        <end position="102"/>
    </location>
    <ligand>
        <name>ATP</name>
        <dbReference type="ChEBI" id="CHEBI:30616"/>
    </ligand>
</feature>
<evidence type="ECO:0000255" key="1">
    <source>
        <dbReference type="HAMAP-Rule" id="MF_00061"/>
    </source>
</evidence>
<name>ISPE_EHRRG</name>
<reference key="1">
    <citation type="journal article" date="2006" name="J. Bacteriol.">
        <title>Comparative genomic analysis of three strains of Ehrlichia ruminantium reveals an active process of genome size plasticity.</title>
        <authorList>
            <person name="Frutos R."/>
            <person name="Viari A."/>
            <person name="Ferraz C."/>
            <person name="Morgat A."/>
            <person name="Eychenie S."/>
            <person name="Kandassamy Y."/>
            <person name="Chantal I."/>
            <person name="Bensaid A."/>
            <person name="Coissac E."/>
            <person name="Vachiery N."/>
            <person name="Demaille J."/>
            <person name="Martinez D."/>
        </authorList>
    </citation>
    <scope>NUCLEOTIDE SEQUENCE [LARGE SCALE GENOMIC DNA]</scope>
    <source>
        <strain>Gardel</strain>
    </source>
</reference>
<comment type="function">
    <text evidence="1">Catalyzes the phosphorylation of the position 2 hydroxy group of 4-diphosphocytidyl-2C-methyl-D-erythritol.</text>
</comment>
<comment type="catalytic activity">
    <reaction evidence="1">
        <text>4-CDP-2-C-methyl-D-erythritol + ATP = 4-CDP-2-C-methyl-D-erythritol 2-phosphate + ADP + H(+)</text>
        <dbReference type="Rhea" id="RHEA:18437"/>
        <dbReference type="ChEBI" id="CHEBI:15378"/>
        <dbReference type="ChEBI" id="CHEBI:30616"/>
        <dbReference type="ChEBI" id="CHEBI:57823"/>
        <dbReference type="ChEBI" id="CHEBI:57919"/>
        <dbReference type="ChEBI" id="CHEBI:456216"/>
        <dbReference type="EC" id="2.7.1.148"/>
    </reaction>
</comment>
<comment type="pathway">
    <text evidence="1">Isoprenoid biosynthesis; isopentenyl diphosphate biosynthesis via DXP pathway; isopentenyl diphosphate from 1-deoxy-D-xylulose 5-phosphate: step 3/6.</text>
</comment>
<comment type="similarity">
    <text evidence="1">Belongs to the GHMP kinase family. IspE subfamily.</text>
</comment>
<keyword id="KW-0067">ATP-binding</keyword>
<keyword id="KW-0414">Isoprene biosynthesis</keyword>
<keyword id="KW-0418">Kinase</keyword>
<keyword id="KW-0547">Nucleotide-binding</keyword>
<keyword id="KW-0808">Transferase</keyword>